<proteinExistence type="evidence at transcript level"/>
<keyword id="KW-0010">Activator</keyword>
<keyword id="KW-0025">Alternative splicing</keyword>
<keyword id="KW-0539">Nucleus</keyword>
<keyword id="KW-0597">Phosphoprotein</keyword>
<keyword id="KW-1185">Reference proteome</keyword>
<keyword id="KW-0677">Repeat</keyword>
<keyword id="KW-0678">Repressor</keyword>
<keyword id="KW-0804">Transcription</keyword>
<keyword id="KW-0805">Transcription regulation</keyword>
<name>MCAF2_MOUSE</name>
<comment type="function">
    <text evidence="1">Recruiter that couples transcriptional factors to general transcription apparatus and thereby modulates transcription regulation and chromatin formation. Can both act as an activator or a repressor depending on the context. Mediates MBD1-dependent transcriptional repression, probably by recruiting complexes containing SETDB1. The complex formed with MBD1 and SETDB1 represses transcription and probably couples DNA methylation and histone H3 'Lys-9' trimethylation (H3K9me3) activity (By similarity).</text>
</comment>
<comment type="subunit">
    <text evidence="1">Interacts with MBD1, SETDB1 and SP1. Probably forms a complex with SETDB1 and MBD1 (By similarity).</text>
</comment>
<comment type="subcellular location">
    <subcellularLocation>
        <location evidence="1">Nucleus</location>
    </subcellularLocation>
</comment>
<comment type="alternative products">
    <event type="alternative splicing"/>
    <isoform>
        <id>Q3UL97-1</id>
        <name>1</name>
        <sequence type="displayed"/>
    </isoform>
    <isoform>
        <id>Q3UL97-2</id>
        <name>2</name>
        <sequence type="described" ref="VSP_024048 VSP_024049"/>
    </isoform>
    <isoform>
        <id>Q3UL97-3</id>
        <name>3</name>
        <sequence type="described" ref="VSP_024046 VSP_024047"/>
    </isoform>
    <isoform>
        <id>Q3UL97-4</id>
        <name>4</name>
        <sequence type="described" ref="VSP_024044 VSP_024045"/>
    </isoform>
</comment>
<comment type="tissue specificity">
    <text evidence="5">Expressed in testis.</text>
</comment>
<comment type="developmental stage">
    <text evidence="5">Expressed in early mouse embryo, especially in the embryonic gonad from 11.5 dpc. Continuously expressed from newborn testis to adult.</text>
</comment>
<comment type="similarity">
    <text evidence="8">Belongs to the MCAF family.</text>
</comment>
<gene>
    <name type="primary">Atf7ip2</name>
    <name type="synonym">Mcaf2</name>
    <name type="synonym">Psm2</name>
</gene>
<evidence type="ECO:0000250" key="1"/>
<evidence type="ECO:0000250" key="2">
    <source>
        <dbReference type="UniProtKB" id="Q5U623"/>
    </source>
</evidence>
<evidence type="ECO:0000255" key="3">
    <source>
        <dbReference type="PROSITE-ProRule" id="PRU00316"/>
    </source>
</evidence>
<evidence type="ECO:0000256" key="4">
    <source>
        <dbReference type="SAM" id="MobiDB-lite"/>
    </source>
</evidence>
<evidence type="ECO:0000269" key="5">
    <source>
    </source>
</evidence>
<evidence type="ECO:0000303" key="6">
    <source>
    </source>
</evidence>
<evidence type="ECO:0000303" key="7">
    <source>
    </source>
</evidence>
<evidence type="ECO:0000305" key="8"/>
<accession>Q3UL97</accession>
<accession>Q3UT16</accession>
<accession>Q4VIF3</accession>
<accession>Q8BPC5</accession>
<accession>Q9D4T8</accession>
<dbReference type="EMBL" id="AY903215">
    <property type="protein sequence ID" value="AAX99226.1"/>
    <property type="molecule type" value="mRNA"/>
</dbReference>
<dbReference type="EMBL" id="AK016180">
    <property type="protein sequence ID" value="BAB30138.1"/>
    <property type="molecule type" value="mRNA"/>
</dbReference>
<dbReference type="EMBL" id="AK077229">
    <property type="protein sequence ID" value="BAC36698.1"/>
    <property type="molecule type" value="mRNA"/>
</dbReference>
<dbReference type="EMBL" id="AK139862">
    <property type="protein sequence ID" value="BAE24164.1"/>
    <property type="molecule type" value="mRNA"/>
</dbReference>
<dbReference type="EMBL" id="AK145634">
    <property type="protein sequence ID" value="BAE26553.1"/>
    <property type="molecule type" value="mRNA"/>
</dbReference>
<dbReference type="CCDS" id="CCDS49758.1">
    <molecule id="Q3UL97-1"/>
</dbReference>
<dbReference type="CCDS" id="CCDS49759.1">
    <molecule id="Q3UL97-3"/>
</dbReference>
<dbReference type="RefSeq" id="NP_083529.1">
    <molecule id="Q3UL97-3"/>
    <property type="nucleotide sequence ID" value="NM_029253.1"/>
</dbReference>
<dbReference type="RefSeq" id="NP_694763.2">
    <molecule id="Q3UL97-1"/>
    <property type="nucleotide sequence ID" value="NM_153123.2"/>
</dbReference>
<dbReference type="SMR" id="Q3UL97"/>
<dbReference type="BioGRID" id="217400">
    <property type="interactions" value="1"/>
</dbReference>
<dbReference type="FunCoup" id="Q3UL97">
    <property type="interactions" value="304"/>
</dbReference>
<dbReference type="STRING" id="10090.ENSMUSP00000036731"/>
<dbReference type="PhosphoSitePlus" id="Q3UL97"/>
<dbReference type="SwissPalm" id="Q3UL97"/>
<dbReference type="PaxDb" id="10090-ENSMUSP00000036731"/>
<dbReference type="ProteomicsDB" id="287323">
    <molecule id="Q3UL97-1"/>
</dbReference>
<dbReference type="ProteomicsDB" id="287324">
    <molecule id="Q3UL97-2"/>
</dbReference>
<dbReference type="ProteomicsDB" id="287325">
    <molecule id="Q3UL97-3"/>
</dbReference>
<dbReference type="ProteomicsDB" id="287326">
    <molecule id="Q3UL97-4"/>
</dbReference>
<dbReference type="Antibodypedia" id="52153">
    <property type="antibodies" value="82 antibodies from 16 providers"/>
</dbReference>
<dbReference type="DNASU" id="75329"/>
<dbReference type="Ensembl" id="ENSMUST00000044005.14">
    <molecule id="Q3UL97-1"/>
    <property type="protein sequence ID" value="ENSMUSP00000036731.8"/>
    <property type="gene ID" value="ENSMUSG00000039200.17"/>
</dbReference>
<dbReference type="Ensembl" id="ENSMUST00000100191.4">
    <molecule id="Q3UL97-4"/>
    <property type="protein sequence ID" value="ENSMUSP00000097766.4"/>
    <property type="gene ID" value="ENSMUSG00000039200.17"/>
</dbReference>
<dbReference type="Ensembl" id="ENSMUST00000117220.8">
    <molecule id="Q3UL97-2"/>
    <property type="protein sequence ID" value="ENSMUSP00000113573.2"/>
    <property type="gene ID" value="ENSMUSG00000039200.17"/>
</dbReference>
<dbReference type="Ensembl" id="ENSMUST00000119023.8">
    <molecule id="Q3UL97-3"/>
    <property type="protein sequence ID" value="ENSMUSP00000113480.2"/>
    <property type="gene ID" value="ENSMUSG00000039200.17"/>
</dbReference>
<dbReference type="GeneID" id="75329"/>
<dbReference type="KEGG" id="mmu:75329"/>
<dbReference type="UCSC" id="uc007ydf.2">
    <molecule id="Q3UL97-3"/>
    <property type="organism name" value="mouse"/>
</dbReference>
<dbReference type="UCSC" id="uc007ydh.2">
    <molecule id="Q3UL97-2"/>
    <property type="organism name" value="mouse"/>
</dbReference>
<dbReference type="UCSC" id="uc007ydi.2">
    <molecule id="Q3UL97-1"/>
    <property type="organism name" value="mouse"/>
</dbReference>
<dbReference type="AGR" id="MGI:1922579"/>
<dbReference type="CTD" id="80063"/>
<dbReference type="MGI" id="MGI:1922579">
    <property type="gene designation" value="Atf7ip2"/>
</dbReference>
<dbReference type="VEuPathDB" id="HostDB:ENSMUSG00000039200"/>
<dbReference type="eggNOG" id="ENOG502S2DM">
    <property type="taxonomic scope" value="Eukaryota"/>
</dbReference>
<dbReference type="GeneTree" id="ENSGT00530000063707"/>
<dbReference type="HOGENOM" id="CLU_025197_0_0_1"/>
<dbReference type="InParanoid" id="Q3UL97"/>
<dbReference type="OMA" id="HLTWKKI"/>
<dbReference type="OrthoDB" id="2434995at2759"/>
<dbReference type="PhylomeDB" id="Q3UL97"/>
<dbReference type="TreeFam" id="TF329427"/>
<dbReference type="BioGRID-ORCS" id="75329">
    <property type="hits" value="3 hits in 76 CRISPR screens"/>
</dbReference>
<dbReference type="PRO" id="PR:Q3UL97"/>
<dbReference type="Proteomes" id="UP000000589">
    <property type="component" value="Chromosome 16"/>
</dbReference>
<dbReference type="RNAct" id="Q3UL97">
    <property type="molecule type" value="protein"/>
</dbReference>
<dbReference type="Bgee" id="ENSMUSG00000039200">
    <property type="expression patterns" value="Expressed in spermatocyte and 72 other cell types or tissues"/>
</dbReference>
<dbReference type="ExpressionAtlas" id="Q3UL97">
    <property type="expression patterns" value="baseline and differential"/>
</dbReference>
<dbReference type="GO" id="GO:0005634">
    <property type="term" value="C:nucleus"/>
    <property type="evidence" value="ECO:0007669"/>
    <property type="project" value="UniProtKB-SubCell"/>
</dbReference>
<dbReference type="Gene3D" id="2.60.40.10">
    <property type="entry name" value="Immunoglobulins"/>
    <property type="match status" value="1"/>
</dbReference>
<dbReference type="InterPro" id="IPR026085">
    <property type="entry name" value="ATF7-int"/>
</dbReference>
<dbReference type="InterPro" id="IPR031870">
    <property type="entry name" value="ATF7IP_BD"/>
</dbReference>
<dbReference type="InterPro" id="IPR056565">
    <property type="entry name" value="Fn3_ATF7IP"/>
</dbReference>
<dbReference type="InterPro" id="IPR003961">
    <property type="entry name" value="FN3_dom"/>
</dbReference>
<dbReference type="InterPro" id="IPR036116">
    <property type="entry name" value="FN3_sf"/>
</dbReference>
<dbReference type="InterPro" id="IPR013783">
    <property type="entry name" value="Ig-like_fold"/>
</dbReference>
<dbReference type="PANTHER" id="PTHR23210">
    <property type="entry name" value="ACTIVATING TRANSCRIPTION FACTOR 7 INTERACTING PROTEIN"/>
    <property type="match status" value="1"/>
</dbReference>
<dbReference type="PANTHER" id="PTHR23210:SF23">
    <property type="entry name" value="ACTIVATING TRANSCRIPTION FACTOR 7-INTERACTING PROTEIN 2"/>
    <property type="match status" value="1"/>
</dbReference>
<dbReference type="Pfam" id="PF16788">
    <property type="entry name" value="ATF7IP_BD"/>
    <property type="match status" value="1"/>
</dbReference>
<dbReference type="Pfam" id="PF16794">
    <property type="entry name" value="fn3_4"/>
    <property type="match status" value="1"/>
</dbReference>
<dbReference type="SUPFAM" id="SSF49265">
    <property type="entry name" value="Fibronectin type III"/>
    <property type="match status" value="1"/>
</dbReference>
<dbReference type="PROSITE" id="PS50853">
    <property type="entry name" value="FN3"/>
    <property type="match status" value="1"/>
</dbReference>
<organism>
    <name type="scientific">Mus musculus</name>
    <name type="common">Mouse</name>
    <dbReference type="NCBI Taxonomy" id="10090"/>
    <lineage>
        <taxon>Eukaryota</taxon>
        <taxon>Metazoa</taxon>
        <taxon>Chordata</taxon>
        <taxon>Craniata</taxon>
        <taxon>Vertebrata</taxon>
        <taxon>Euteleostomi</taxon>
        <taxon>Mammalia</taxon>
        <taxon>Eutheria</taxon>
        <taxon>Euarchontoglires</taxon>
        <taxon>Glires</taxon>
        <taxon>Rodentia</taxon>
        <taxon>Myomorpha</taxon>
        <taxon>Muroidea</taxon>
        <taxon>Muridae</taxon>
        <taxon>Murinae</taxon>
        <taxon>Mus</taxon>
        <taxon>Mus</taxon>
    </lineage>
</organism>
<feature type="chain" id="PRO_0000281785" description="Activating transcription factor 7-interacting protein 2">
    <location>
        <begin position="1"/>
        <end position="452"/>
    </location>
</feature>
<feature type="domain" description="Fibronectin type-III" evidence="3">
    <location>
        <begin position="346"/>
        <end position="450"/>
    </location>
</feature>
<feature type="region of interest" description="Disordered" evidence="4">
    <location>
        <begin position="185"/>
        <end position="206"/>
    </location>
</feature>
<feature type="modified residue" description="Phosphoserine" evidence="2">
    <location>
        <position position="184"/>
    </location>
</feature>
<feature type="modified residue" description="Phosphoserine" evidence="2">
    <location>
        <position position="257"/>
    </location>
</feature>
<feature type="splice variant" id="VSP_024044" description="In isoform 4." evidence="6">
    <original>GRKTNLPSTCVEFASESNTDDV</original>
    <variation>AGFENCGQSPDQFLVPNNSLLT</variation>
    <location>
        <begin position="204"/>
        <end position="225"/>
    </location>
</feature>
<feature type="splice variant" id="VSP_024045" description="In isoform 4." evidence="6">
    <location>
        <begin position="226"/>
        <end position="452"/>
    </location>
</feature>
<feature type="splice variant" id="VSP_024046" description="In isoform 3." evidence="6">
    <original>ESPSFTLKSTSKA</original>
    <variation>GKGCFYIFLSKCM</variation>
    <location>
        <begin position="288"/>
        <end position="300"/>
    </location>
</feature>
<feature type="splice variant" id="VSP_024047" description="In isoform 3." evidence="6">
    <location>
        <begin position="301"/>
        <end position="452"/>
    </location>
</feature>
<feature type="splice variant" id="VSP_024048" description="In isoform 2." evidence="6 7">
    <original>GFG</original>
    <variation>VLT</variation>
    <location>
        <begin position="317"/>
        <end position="319"/>
    </location>
</feature>
<feature type="splice variant" id="VSP_024049" description="In isoform 2." evidence="6 7">
    <location>
        <begin position="320"/>
        <end position="452"/>
    </location>
</feature>
<feature type="sequence conflict" description="In Ref. 1; AAX99226." evidence="8" ref="1">
    <original>M</original>
    <variation>V</variation>
    <location>
        <position position="18"/>
    </location>
</feature>
<feature type="sequence conflict" description="In Ref. 1; AAX99226." evidence="8" ref="1">
    <original>S</original>
    <variation>G</variation>
    <location>
        <position position="21"/>
    </location>
</feature>
<feature type="sequence conflict" description="In Ref. 1; AAX99226." evidence="8" ref="1">
    <original>I</original>
    <variation>V</variation>
    <location>
        <position position="97"/>
    </location>
</feature>
<feature type="sequence conflict" description="In Ref. 2; BAE24164." evidence="8" ref="2">
    <original>R</original>
    <variation>T</variation>
    <location>
        <position position="188"/>
    </location>
</feature>
<feature type="sequence conflict" description="In Ref. 2; BAB30138." evidence="8" ref="2">
    <original>KNS</original>
    <variation>NFF</variation>
    <location>
        <begin position="231"/>
        <end position="233"/>
    </location>
</feature>
<protein>
    <recommendedName>
        <fullName>Activating transcription factor 7-interacting protein 2</fullName>
    </recommendedName>
    <alternativeName>
        <fullName>MBD1-containing chromatin-associated factor 2</fullName>
    </alternativeName>
    <alternativeName>
        <fullName>Protein similar to MCAF2</fullName>
    </alternativeName>
</protein>
<reference key="1">
    <citation type="journal article" date="2006" name="Mol. Biol. Rep.">
        <title>PSM2, a novel protein similar to MCAF2, is involved in the mouse embryonic and adult male gonad development.</title>
        <authorList>
            <person name="Cai H."/>
            <person name="Hu J."/>
            <person name="Song P."/>
            <person name="Gong W."/>
        </authorList>
    </citation>
    <scope>NUCLEOTIDE SEQUENCE [MRNA] (ISOFORM 2)</scope>
    <scope>TISSUE SPECIFICITY</scope>
    <scope>DEVELOPMENTAL STAGE</scope>
    <source>
        <strain>BALB/cJ</strain>
        <tissue>Testis</tissue>
    </source>
</reference>
<reference key="2">
    <citation type="journal article" date="2005" name="Science">
        <title>The transcriptional landscape of the mammalian genome.</title>
        <authorList>
            <person name="Carninci P."/>
            <person name="Kasukawa T."/>
            <person name="Katayama S."/>
            <person name="Gough J."/>
            <person name="Frith M.C."/>
            <person name="Maeda N."/>
            <person name="Oyama R."/>
            <person name="Ravasi T."/>
            <person name="Lenhard B."/>
            <person name="Wells C."/>
            <person name="Kodzius R."/>
            <person name="Shimokawa K."/>
            <person name="Bajic V.B."/>
            <person name="Brenner S.E."/>
            <person name="Batalov S."/>
            <person name="Forrest A.R."/>
            <person name="Zavolan M."/>
            <person name="Davis M.J."/>
            <person name="Wilming L.G."/>
            <person name="Aidinis V."/>
            <person name="Allen J.E."/>
            <person name="Ambesi-Impiombato A."/>
            <person name="Apweiler R."/>
            <person name="Aturaliya R.N."/>
            <person name="Bailey T.L."/>
            <person name="Bansal M."/>
            <person name="Baxter L."/>
            <person name="Beisel K.W."/>
            <person name="Bersano T."/>
            <person name="Bono H."/>
            <person name="Chalk A.M."/>
            <person name="Chiu K.P."/>
            <person name="Choudhary V."/>
            <person name="Christoffels A."/>
            <person name="Clutterbuck D.R."/>
            <person name="Crowe M.L."/>
            <person name="Dalla E."/>
            <person name="Dalrymple B.P."/>
            <person name="de Bono B."/>
            <person name="Della Gatta G."/>
            <person name="di Bernardo D."/>
            <person name="Down T."/>
            <person name="Engstrom P."/>
            <person name="Fagiolini M."/>
            <person name="Faulkner G."/>
            <person name="Fletcher C.F."/>
            <person name="Fukushima T."/>
            <person name="Furuno M."/>
            <person name="Futaki S."/>
            <person name="Gariboldi M."/>
            <person name="Georgii-Hemming P."/>
            <person name="Gingeras T.R."/>
            <person name="Gojobori T."/>
            <person name="Green R.E."/>
            <person name="Gustincich S."/>
            <person name="Harbers M."/>
            <person name="Hayashi Y."/>
            <person name="Hensch T.K."/>
            <person name="Hirokawa N."/>
            <person name="Hill D."/>
            <person name="Huminiecki L."/>
            <person name="Iacono M."/>
            <person name="Ikeo K."/>
            <person name="Iwama A."/>
            <person name="Ishikawa T."/>
            <person name="Jakt M."/>
            <person name="Kanapin A."/>
            <person name="Katoh M."/>
            <person name="Kawasawa Y."/>
            <person name="Kelso J."/>
            <person name="Kitamura H."/>
            <person name="Kitano H."/>
            <person name="Kollias G."/>
            <person name="Krishnan S.P."/>
            <person name="Kruger A."/>
            <person name="Kummerfeld S.K."/>
            <person name="Kurochkin I.V."/>
            <person name="Lareau L.F."/>
            <person name="Lazarevic D."/>
            <person name="Lipovich L."/>
            <person name="Liu J."/>
            <person name="Liuni S."/>
            <person name="McWilliam S."/>
            <person name="Madan Babu M."/>
            <person name="Madera M."/>
            <person name="Marchionni L."/>
            <person name="Matsuda H."/>
            <person name="Matsuzawa S."/>
            <person name="Miki H."/>
            <person name="Mignone F."/>
            <person name="Miyake S."/>
            <person name="Morris K."/>
            <person name="Mottagui-Tabar S."/>
            <person name="Mulder N."/>
            <person name="Nakano N."/>
            <person name="Nakauchi H."/>
            <person name="Ng P."/>
            <person name="Nilsson R."/>
            <person name="Nishiguchi S."/>
            <person name="Nishikawa S."/>
            <person name="Nori F."/>
            <person name="Ohara O."/>
            <person name="Okazaki Y."/>
            <person name="Orlando V."/>
            <person name="Pang K.C."/>
            <person name="Pavan W.J."/>
            <person name="Pavesi G."/>
            <person name="Pesole G."/>
            <person name="Petrovsky N."/>
            <person name="Piazza S."/>
            <person name="Reed J."/>
            <person name="Reid J.F."/>
            <person name="Ring B.Z."/>
            <person name="Ringwald M."/>
            <person name="Rost B."/>
            <person name="Ruan Y."/>
            <person name="Salzberg S.L."/>
            <person name="Sandelin A."/>
            <person name="Schneider C."/>
            <person name="Schoenbach C."/>
            <person name="Sekiguchi K."/>
            <person name="Semple C.A."/>
            <person name="Seno S."/>
            <person name="Sessa L."/>
            <person name="Sheng Y."/>
            <person name="Shibata Y."/>
            <person name="Shimada H."/>
            <person name="Shimada K."/>
            <person name="Silva D."/>
            <person name="Sinclair B."/>
            <person name="Sperling S."/>
            <person name="Stupka E."/>
            <person name="Sugiura K."/>
            <person name="Sultana R."/>
            <person name="Takenaka Y."/>
            <person name="Taki K."/>
            <person name="Tammoja K."/>
            <person name="Tan S.L."/>
            <person name="Tang S."/>
            <person name="Taylor M.S."/>
            <person name="Tegner J."/>
            <person name="Teichmann S.A."/>
            <person name="Ueda H.R."/>
            <person name="van Nimwegen E."/>
            <person name="Verardo R."/>
            <person name="Wei C.L."/>
            <person name="Yagi K."/>
            <person name="Yamanishi H."/>
            <person name="Zabarovsky E."/>
            <person name="Zhu S."/>
            <person name="Zimmer A."/>
            <person name="Hide W."/>
            <person name="Bult C."/>
            <person name="Grimmond S.M."/>
            <person name="Teasdale R.D."/>
            <person name="Liu E.T."/>
            <person name="Brusic V."/>
            <person name="Quackenbush J."/>
            <person name="Wahlestedt C."/>
            <person name="Mattick J.S."/>
            <person name="Hume D.A."/>
            <person name="Kai C."/>
            <person name="Sasaki D."/>
            <person name="Tomaru Y."/>
            <person name="Fukuda S."/>
            <person name="Kanamori-Katayama M."/>
            <person name="Suzuki M."/>
            <person name="Aoki J."/>
            <person name="Arakawa T."/>
            <person name="Iida J."/>
            <person name="Imamura K."/>
            <person name="Itoh M."/>
            <person name="Kato T."/>
            <person name="Kawaji H."/>
            <person name="Kawagashira N."/>
            <person name="Kawashima T."/>
            <person name="Kojima M."/>
            <person name="Kondo S."/>
            <person name="Konno H."/>
            <person name="Nakano K."/>
            <person name="Ninomiya N."/>
            <person name="Nishio T."/>
            <person name="Okada M."/>
            <person name="Plessy C."/>
            <person name="Shibata K."/>
            <person name="Shiraki T."/>
            <person name="Suzuki S."/>
            <person name="Tagami M."/>
            <person name="Waki K."/>
            <person name="Watahiki A."/>
            <person name="Okamura-Oho Y."/>
            <person name="Suzuki H."/>
            <person name="Kawai J."/>
            <person name="Hayashizaki Y."/>
        </authorList>
    </citation>
    <scope>NUCLEOTIDE SEQUENCE [LARGE SCALE MRNA] (ISOFORMS 1; 2; 3 AND 4)</scope>
    <source>
        <strain>C57BL/6J</strain>
        <tissue>Egg</tissue>
        <tissue>Ovary</tissue>
        <tissue>Testis</tissue>
        <tissue>Uterus</tissue>
    </source>
</reference>
<sequence>MESPDRKRQKVLKAKKTMPTSYQKQLEILNKSTNVEAPKTTVGTNIPNGHNQKMFSKNKENVKVMKVSEQINENACGALERHTALLEQVKHWIRQEICMINCNLFDKKLNELNERIGKTQCKSRHEAIAGELFVKIRRLQKRIKTVLSSQRNCLEPNTLPSNTVCKVTDSEAMNLNVTQKSVKSRSKRISSVNHTPLNSSEKAGRKTNLPSTCVEFASESNTDDVMLISVKNSNLTTSITSEQTEIRKNTSRNLSNSPNSMIKVGPVEKKFDFVIDLTREGPSNYSIESPSFTLKSTSKAVLRSKEIIPVAENGNEGFGSFEHLPPLPEPPAPLPEMADKIKDTLPPQKPELKVKWVLRPTSIALTWNIPKVNPNCAPVESYHLFLYYENSDHLTWKKIAEIKALPLPMACTLSQNLASTKYYFAVQSKDIFGRYGPFCNIKSIPRFSENLT</sequence>